<feature type="chain" id="PRO_1000040550" description="6,7-dimethyl-8-ribityllumazine synthase">
    <location>
        <begin position="1"/>
        <end position="154"/>
    </location>
</feature>
<feature type="active site" description="Proton donor" evidence="1">
    <location>
        <position position="88"/>
    </location>
</feature>
<feature type="binding site" evidence="1">
    <location>
        <position position="22"/>
    </location>
    <ligand>
        <name>5-amino-6-(D-ribitylamino)uracil</name>
        <dbReference type="ChEBI" id="CHEBI:15934"/>
    </ligand>
</feature>
<feature type="binding site" evidence="1">
    <location>
        <begin position="56"/>
        <end position="58"/>
    </location>
    <ligand>
        <name>5-amino-6-(D-ribitylamino)uracil</name>
        <dbReference type="ChEBI" id="CHEBI:15934"/>
    </ligand>
</feature>
<feature type="binding site" evidence="1">
    <location>
        <begin position="80"/>
        <end position="82"/>
    </location>
    <ligand>
        <name>5-amino-6-(D-ribitylamino)uracil</name>
        <dbReference type="ChEBI" id="CHEBI:15934"/>
    </ligand>
</feature>
<feature type="binding site" evidence="1">
    <location>
        <begin position="85"/>
        <end position="86"/>
    </location>
    <ligand>
        <name>(2S)-2-hydroxy-3-oxobutyl phosphate</name>
        <dbReference type="ChEBI" id="CHEBI:58830"/>
    </ligand>
</feature>
<feature type="binding site" evidence="1">
    <location>
        <position position="113"/>
    </location>
    <ligand>
        <name>5-amino-6-(D-ribitylamino)uracil</name>
        <dbReference type="ChEBI" id="CHEBI:15934"/>
    </ligand>
</feature>
<feature type="binding site" evidence="1">
    <location>
        <position position="127"/>
    </location>
    <ligand>
        <name>(2S)-2-hydroxy-3-oxobutyl phosphate</name>
        <dbReference type="ChEBI" id="CHEBI:58830"/>
    </ligand>
</feature>
<comment type="function">
    <text evidence="1">Catalyzes the formation of 6,7-dimethyl-8-ribityllumazine by condensation of 5-amino-6-(D-ribitylamino)uracil with 3,4-dihydroxy-2-butanone 4-phosphate. This is the penultimate step in the biosynthesis of riboflavin.</text>
</comment>
<comment type="catalytic activity">
    <reaction evidence="1">
        <text>(2S)-2-hydroxy-3-oxobutyl phosphate + 5-amino-6-(D-ribitylamino)uracil = 6,7-dimethyl-8-(1-D-ribityl)lumazine + phosphate + 2 H2O + H(+)</text>
        <dbReference type="Rhea" id="RHEA:26152"/>
        <dbReference type="ChEBI" id="CHEBI:15377"/>
        <dbReference type="ChEBI" id="CHEBI:15378"/>
        <dbReference type="ChEBI" id="CHEBI:15934"/>
        <dbReference type="ChEBI" id="CHEBI:43474"/>
        <dbReference type="ChEBI" id="CHEBI:58201"/>
        <dbReference type="ChEBI" id="CHEBI:58830"/>
        <dbReference type="EC" id="2.5.1.78"/>
    </reaction>
</comment>
<comment type="pathway">
    <text evidence="1">Cofactor biosynthesis; riboflavin biosynthesis; riboflavin from 2-hydroxy-3-oxobutyl phosphate and 5-amino-6-(D-ribitylamino)uracil: step 1/2.</text>
</comment>
<comment type="subunit">
    <text evidence="1">Forms an icosahedral capsid composed of 60 subunits, arranged as a dodecamer of pentamers.</text>
</comment>
<comment type="similarity">
    <text evidence="1">Belongs to the DMRL synthase family.</text>
</comment>
<accession>Q2NZ91</accession>
<organism>
    <name type="scientific">Xanthomonas oryzae pv. oryzae (strain MAFF 311018)</name>
    <dbReference type="NCBI Taxonomy" id="342109"/>
    <lineage>
        <taxon>Bacteria</taxon>
        <taxon>Pseudomonadati</taxon>
        <taxon>Pseudomonadota</taxon>
        <taxon>Gammaproteobacteria</taxon>
        <taxon>Lysobacterales</taxon>
        <taxon>Lysobacteraceae</taxon>
        <taxon>Xanthomonas</taxon>
    </lineage>
</organism>
<gene>
    <name evidence="1" type="primary">ribH</name>
    <name type="ordered locus">XOO3631</name>
</gene>
<sequence length="154" mass="16223">MTHYEGDLRPPTARFAIIASRWNARITDVLVAGARQSLAGNGIGEDAIDVIRVPGAWEIPVAANRVAQSGQHGAIIALGCVIRGDTRHYEHVADLCAEGLMSVQLQTGVPVLNGVLAVERVEDAEARAGGSHGNKGEECALAALELVNLMELLP</sequence>
<evidence type="ECO:0000255" key="1">
    <source>
        <dbReference type="HAMAP-Rule" id="MF_00178"/>
    </source>
</evidence>
<name>RISB_XANOM</name>
<protein>
    <recommendedName>
        <fullName evidence="1">6,7-dimethyl-8-ribityllumazine synthase</fullName>
        <shortName evidence="1">DMRL synthase</shortName>
        <shortName evidence="1">LS</shortName>
        <shortName evidence="1">Lumazine synthase</shortName>
        <ecNumber evidence="1">2.5.1.78</ecNumber>
    </recommendedName>
</protein>
<reference key="1">
    <citation type="journal article" date="2005" name="Jpn. Agric. Res. Q.">
        <title>Genome sequence of Xanthomonas oryzae pv. oryzae suggests contribution of large numbers of effector genes and insertion sequences to its race diversity.</title>
        <authorList>
            <person name="Ochiai H."/>
            <person name="Inoue Y."/>
            <person name="Takeya M."/>
            <person name="Sasaki A."/>
            <person name="Kaku H."/>
        </authorList>
    </citation>
    <scope>NUCLEOTIDE SEQUENCE [LARGE SCALE GENOMIC DNA]</scope>
    <source>
        <strain>MAFF 311018</strain>
    </source>
</reference>
<dbReference type="EC" id="2.5.1.78" evidence="1"/>
<dbReference type="EMBL" id="AP008229">
    <property type="protein sequence ID" value="BAE70386.1"/>
    <property type="molecule type" value="Genomic_DNA"/>
</dbReference>
<dbReference type="RefSeq" id="WP_011409394.1">
    <property type="nucleotide sequence ID" value="NC_007705.1"/>
</dbReference>
<dbReference type="SMR" id="Q2NZ91"/>
<dbReference type="KEGG" id="xom:XOO3631"/>
<dbReference type="HOGENOM" id="CLU_089358_1_2_6"/>
<dbReference type="UniPathway" id="UPA00275">
    <property type="reaction ID" value="UER00404"/>
</dbReference>
<dbReference type="GO" id="GO:0005829">
    <property type="term" value="C:cytosol"/>
    <property type="evidence" value="ECO:0007669"/>
    <property type="project" value="TreeGrafter"/>
</dbReference>
<dbReference type="GO" id="GO:0009349">
    <property type="term" value="C:riboflavin synthase complex"/>
    <property type="evidence" value="ECO:0007669"/>
    <property type="project" value="InterPro"/>
</dbReference>
<dbReference type="GO" id="GO:0000906">
    <property type="term" value="F:6,7-dimethyl-8-ribityllumazine synthase activity"/>
    <property type="evidence" value="ECO:0007669"/>
    <property type="project" value="UniProtKB-UniRule"/>
</dbReference>
<dbReference type="GO" id="GO:0009231">
    <property type="term" value="P:riboflavin biosynthetic process"/>
    <property type="evidence" value="ECO:0007669"/>
    <property type="project" value="UniProtKB-UniRule"/>
</dbReference>
<dbReference type="CDD" id="cd09209">
    <property type="entry name" value="Lumazine_synthase-I"/>
    <property type="match status" value="1"/>
</dbReference>
<dbReference type="FunFam" id="3.40.50.960:FF:000004">
    <property type="entry name" value="6,7-dimethyl-8-ribityllumazine synthase"/>
    <property type="match status" value="1"/>
</dbReference>
<dbReference type="Gene3D" id="3.40.50.960">
    <property type="entry name" value="Lumazine/riboflavin synthase"/>
    <property type="match status" value="1"/>
</dbReference>
<dbReference type="HAMAP" id="MF_00178">
    <property type="entry name" value="Lumazine_synth"/>
    <property type="match status" value="1"/>
</dbReference>
<dbReference type="InterPro" id="IPR034964">
    <property type="entry name" value="LS"/>
</dbReference>
<dbReference type="InterPro" id="IPR002180">
    <property type="entry name" value="LS/RS"/>
</dbReference>
<dbReference type="InterPro" id="IPR036467">
    <property type="entry name" value="LS/RS_sf"/>
</dbReference>
<dbReference type="NCBIfam" id="TIGR00114">
    <property type="entry name" value="lumazine-synth"/>
    <property type="match status" value="1"/>
</dbReference>
<dbReference type="PANTHER" id="PTHR21058:SF0">
    <property type="entry name" value="6,7-DIMETHYL-8-RIBITYLLUMAZINE SYNTHASE"/>
    <property type="match status" value="1"/>
</dbReference>
<dbReference type="PANTHER" id="PTHR21058">
    <property type="entry name" value="6,7-DIMETHYL-8-RIBITYLLUMAZINE SYNTHASE DMRL SYNTHASE LUMAZINE SYNTHASE"/>
    <property type="match status" value="1"/>
</dbReference>
<dbReference type="Pfam" id="PF00885">
    <property type="entry name" value="DMRL_synthase"/>
    <property type="match status" value="1"/>
</dbReference>
<dbReference type="SUPFAM" id="SSF52121">
    <property type="entry name" value="Lumazine synthase"/>
    <property type="match status" value="1"/>
</dbReference>
<proteinExistence type="inferred from homology"/>
<keyword id="KW-0686">Riboflavin biosynthesis</keyword>
<keyword id="KW-0808">Transferase</keyword>